<proteinExistence type="inferred from homology"/>
<gene>
    <name evidence="1" type="primary">tdh</name>
    <name type="ordered locus">Mmwyl1_3793</name>
</gene>
<dbReference type="EC" id="1.1.1.103" evidence="1"/>
<dbReference type="EMBL" id="CP000749">
    <property type="protein sequence ID" value="ABR72692.1"/>
    <property type="molecule type" value="Genomic_DNA"/>
</dbReference>
<dbReference type="SMR" id="A6W1W3"/>
<dbReference type="STRING" id="400668.Mmwyl1_3793"/>
<dbReference type="KEGG" id="mmw:Mmwyl1_3793"/>
<dbReference type="eggNOG" id="COG1063">
    <property type="taxonomic scope" value="Bacteria"/>
</dbReference>
<dbReference type="HOGENOM" id="CLU_026673_11_0_6"/>
<dbReference type="OrthoDB" id="9773078at2"/>
<dbReference type="UniPathway" id="UPA00046">
    <property type="reaction ID" value="UER00505"/>
</dbReference>
<dbReference type="GO" id="GO:0005737">
    <property type="term" value="C:cytoplasm"/>
    <property type="evidence" value="ECO:0007669"/>
    <property type="project" value="UniProtKB-SubCell"/>
</dbReference>
<dbReference type="GO" id="GO:0008743">
    <property type="term" value="F:L-threonine 3-dehydrogenase activity"/>
    <property type="evidence" value="ECO:0007669"/>
    <property type="project" value="UniProtKB-UniRule"/>
</dbReference>
<dbReference type="GO" id="GO:0008270">
    <property type="term" value="F:zinc ion binding"/>
    <property type="evidence" value="ECO:0007669"/>
    <property type="project" value="UniProtKB-UniRule"/>
</dbReference>
<dbReference type="GO" id="GO:0019518">
    <property type="term" value="P:L-threonine catabolic process to glycine"/>
    <property type="evidence" value="ECO:0007669"/>
    <property type="project" value="UniProtKB-UniPathway"/>
</dbReference>
<dbReference type="Gene3D" id="3.90.180.10">
    <property type="entry name" value="Medium-chain alcohol dehydrogenases, catalytic domain"/>
    <property type="match status" value="1"/>
</dbReference>
<dbReference type="Gene3D" id="3.40.50.720">
    <property type="entry name" value="NAD(P)-binding Rossmann-like Domain"/>
    <property type="match status" value="1"/>
</dbReference>
<dbReference type="HAMAP" id="MF_00627">
    <property type="entry name" value="Thr_dehydrog"/>
    <property type="match status" value="1"/>
</dbReference>
<dbReference type="InterPro" id="IPR013149">
    <property type="entry name" value="ADH-like_C"/>
</dbReference>
<dbReference type="InterPro" id="IPR013154">
    <property type="entry name" value="ADH-like_N"/>
</dbReference>
<dbReference type="InterPro" id="IPR002328">
    <property type="entry name" value="ADH_Zn_CS"/>
</dbReference>
<dbReference type="InterPro" id="IPR011032">
    <property type="entry name" value="GroES-like_sf"/>
</dbReference>
<dbReference type="InterPro" id="IPR004627">
    <property type="entry name" value="L-Threonine_3-DHase"/>
</dbReference>
<dbReference type="InterPro" id="IPR036291">
    <property type="entry name" value="NAD(P)-bd_dom_sf"/>
</dbReference>
<dbReference type="InterPro" id="IPR020843">
    <property type="entry name" value="PKS_ER"/>
</dbReference>
<dbReference type="InterPro" id="IPR050129">
    <property type="entry name" value="Zn_alcohol_dh"/>
</dbReference>
<dbReference type="NCBIfam" id="NF003808">
    <property type="entry name" value="PRK05396.1"/>
    <property type="match status" value="1"/>
</dbReference>
<dbReference type="NCBIfam" id="TIGR00692">
    <property type="entry name" value="tdh"/>
    <property type="match status" value="1"/>
</dbReference>
<dbReference type="PANTHER" id="PTHR43401">
    <property type="entry name" value="L-THREONINE 3-DEHYDROGENASE"/>
    <property type="match status" value="1"/>
</dbReference>
<dbReference type="PANTHER" id="PTHR43401:SF2">
    <property type="entry name" value="L-THREONINE 3-DEHYDROGENASE"/>
    <property type="match status" value="1"/>
</dbReference>
<dbReference type="Pfam" id="PF08240">
    <property type="entry name" value="ADH_N"/>
    <property type="match status" value="1"/>
</dbReference>
<dbReference type="Pfam" id="PF00107">
    <property type="entry name" value="ADH_zinc_N"/>
    <property type="match status" value="1"/>
</dbReference>
<dbReference type="SMART" id="SM00829">
    <property type="entry name" value="PKS_ER"/>
    <property type="match status" value="1"/>
</dbReference>
<dbReference type="SUPFAM" id="SSF50129">
    <property type="entry name" value="GroES-like"/>
    <property type="match status" value="1"/>
</dbReference>
<dbReference type="SUPFAM" id="SSF51735">
    <property type="entry name" value="NAD(P)-binding Rossmann-fold domains"/>
    <property type="match status" value="1"/>
</dbReference>
<dbReference type="PROSITE" id="PS00059">
    <property type="entry name" value="ADH_ZINC"/>
    <property type="match status" value="1"/>
</dbReference>
<accession>A6W1W3</accession>
<protein>
    <recommendedName>
        <fullName evidence="1">L-threonine 3-dehydrogenase</fullName>
        <shortName evidence="1">TDH</shortName>
        <ecNumber evidence="1">1.1.1.103</ecNumber>
    </recommendedName>
</protein>
<comment type="function">
    <text evidence="1">Catalyzes the NAD(+)-dependent oxidation of L-threonine to 2-amino-3-ketobutyrate.</text>
</comment>
<comment type="catalytic activity">
    <reaction evidence="1">
        <text>L-threonine + NAD(+) = (2S)-2-amino-3-oxobutanoate + NADH + H(+)</text>
        <dbReference type="Rhea" id="RHEA:13161"/>
        <dbReference type="ChEBI" id="CHEBI:15378"/>
        <dbReference type="ChEBI" id="CHEBI:57540"/>
        <dbReference type="ChEBI" id="CHEBI:57926"/>
        <dbReference type="ChEBI" id="CHEBI:57945"/>
        <dbReference type="ChEBI" id="CHEBI:78948"/>
        <dbReference type="EC" id="1.1.1.103"/>
    </reaction>
</comment>
<comment type="cofactor">
    <cofactor evidence="1">
        <name>Zn(2+)</name>
        <dbReference type="ChEBI" id="CHEBI:29105"/>
    </cofactor>
    <text evidence="1">Binds 2 Zn(2+) ions per subunit.</text>
</comment>
<comment type="pathway">
    <text evidence="1">Amino-acid degradation; L-threonine degradation via oxydo-reductase pathway; glycine from L-threonine: step 1/2.</text>
</comment>
<comment type="subunit">
    <text evidence="1">Homotetramer.</text>
</comment>
<comment type="subcellular location">
    <subcellularLocation>
        <location evidence="1">Cytoplasm</location>
    </subcellularLocation>
</comment>
<comment type="similarity">
    <text evidence="1">Belongs to the zinc-containing alcohol dehydrogenase family.</text>
</comment>
<feature type="chain" id="PRO_1000082612" description="L-threonine 3-dehydrogenase">
    <location>
        <begin position="1"/>
        <end position="341"/>
    </location>
</feature>
<feature type="active site" description="Charge relay system" evidence="1">
    <location>
        <position position="40"/>
    </location>
</feature>
<feature type="active site" description="Charge relay system" evidence="1">
    <location>
        <position position="43"/>
    </location>
</feature>
<feature type="binding site" evidence="1">
    <location>
        <position position="38"/>
    </location>
    <ligand>
        <name>Zn(2+)</name>
        <dbReference type="ChEBI" id="CHEBI:29105"/>
        <label>1</label>
        <note>catalytic</note>
    </ligand>
</feature>
<feature type="binding site" evidence="1">
    <location>
        <position position="63"/>
    </location>
    <ligand>
        <name>Zn(2+)</name>
        <dbReference type="ChEBI" id="CHEBI:29105"/>
        <label>1</label>
        <note>catalytic</note>
    </ligand>
</feature>
<feature type="binding site" evidence="1">
    <location>
        <position position="64"/>
    </location>
    <ligand>
        <name>Zn(2+)</name>
        <dbReference type="ChEBI" id="CHEBI:29105"/>
        <label>1</label>
        <note>catalytic</note>
    </ligand>
</feature>
<feature type="binding site" evidence="1">
    <location>
        <position position="93"/>
    </location>
    <ligand>
        <name>Zn(2+)</name>
        <dbReference type="ChEBI" id="CHEBI:29105"/>
        <label>2</label>
    </ligand>
</feature>
<feature type="binding site" evidence="1">
    <location>
        <position position="96"/>
    </location>
    <ligand>
        <name>Zn(2+)</name>
        <dbReference type="ChEBI" id="CHEBI:29105"/>
        <label>2</label>
    </ligand>
</feature>
<feature type="binding site" evidence="1">
    <location>
        <position position="99"/>
    </location>
    <ligand>
        <name>Zn(2+)</name>
        <dbReference type="ChEBI" id="CHEBI:29105"/>
        <label>2</label>
    </ligand>
</feature>
<feature type="binding site" evidence="1">
    <location>
        <position position="107"/>
    </location>
    <ligand>
        <name>Zn(2+)</name>
        <dbReference type="ChEBI" id="CHEBI:29105"/>
        <label>2</label>
    </ligand>
</feature>
<feature type="binding site" evidence="1">
    <location>
        <position position="175"/>
    </location>
    <ligand>
        <name>NAD(+)</name>
        <dbReference type="ChEBI" id="CHEBI:57540"/>
    </ligand>
</feature>
<feature type="binding site" evidence="1">
    <location>
        <position position="195"/>
    </location>
    <ligand>
        <name>NAD(+)</name>
        <dbReference type="ChEBI" id="CHEBI:57540"/>
    </ligand>
</feature>
<feature type="binding site" evidence="1">
    <location>
        <position position="200"/>
    </location>
    <ligand>
        <name>NAD(+)</name>
        <dbReference type="ChEBI" id="CHEBI:57540"/>
    </ligand>
</feature>
<feature type="binding site" evidence="1">
    <location>
        <begin position="262"/>
        <end position="264"/>
    </location>
    <ligand>
        <name>NAD(+)</name>
        <dbReference type="ChEBI" id="CHEBI:57540"/>
    </ligand>
</feature>
<feature type="binding site" evidence="1">
    <location>
        <begin position="286"/>
        <end position="287"/>
    </location>
    <ligand>
        <name>NAD(+)</name>
        <dbReference type="ChEBI" id="CHEBI:57540"/>
    </ligand>
</feature>
<feature type="site" description="Important for catalytic activity for the proton relay mechanism but does not participate directly in the coordination of zinc atom" evidence="1">
    <location>
        <position position="148"/>
    </location>
</feature>
<reference key="1">
    <citation type="submission" date="2007-06" db="EMBL/GenBank/DDBJ databases">
        <title>Complete sequence of Marinomonas sp. MWYL1.</title>
        <authorList>
            <consortium name="US DOE Joint Genome Institute"/>
            <person name="Copeland A."/>
            <person name="Lucas S."/>
            <person name="Lapidus A."/>
            <person name="Barry K."/>
            <person name="Glavina del Rio T."/>
            <person name="Dalin E."/>
            <person name="Tice H."/>
            <person name="Pitluck S."/>
            <person name="Kiss H."/>
            <person name="Brettin T."/>
            <person name="Bruce D."/>
            <person name="Detter J.C."/>
            <person name="Han C."/>
            <person name="Schmutz J."/>
            <person name="Larimer F."/>
            <person name="Land M."/>
            <person name="Hauser L."/>
            <person name="Kyrpides N."/>
            <person name="Kim E."/>
            <person name="Johnston A.W.B."/>
            <person name="Todd J.D."/>
            <person name="Rogers R."/>
            <person name="Wexler M."/>
            <person name="Bond P.L."/>
            <person name="Li Y."/>
            <person name="Richardson P."/>
        </authorList>
    </citation>
    <scope>NUCLEOTIDE SEQUENCE [LARGE SCALE GENOMIC DNA]</scope>
    <source>
        <strain>MWYL1</strain>
    </source>
</reference>
<organism>
    <name type="scientific">Marinomonas sp. (strain MWYL1)</name>
    <dbReference type="NCBI Taxonomy" id="400668"/>
    <lineage>
        <taxon>Bacteria</taxon>
        <taxon>Pseudomonadati</taxon>
        <taxon>Pseudomonadota</taxon>
        <taxon>Gammaproteobacteria</taxon>
        <taxon>Oceanospirillales</taxon>
        <taxon>Oceanospirillaceae</taxon>
        <taxon>Marinomonas</taxon>
    </lineage>
</organism>
<sequence length="341" mass="37328">MKTLAKLHAEKGIWMTDVPHPDCGHNDVVIKISKTAICGTDMHIYQWDDWAQNTIPVPMTVGHEFVGVITEVGPEVSGFKIGDRVSGEGHITCGHCRNCRAGRRHLCRKTLGVGVNRTGAFAEYLVIPASNAFKIPNNISDDMAAIFDPFGNATHTALSFDLIGEDVLITGAGPIGAMAAAIAKHVGARNVVITDVNDFRLDLAKKMGATRTVNVSRESLKDVMTEIDMHEGFDVGLEMSGNDMAFRSMLECMNHGGKIAMLGIPGKDTLIDWNQVIFKGLIIKGIYGREMYETWYKMVAMLQSGLDISPIITHRFKVDEFQQGFDTMGSGLSGKVILDWN</sequence>
<keyword id="KW-0963">Cytoplasm</keyword>
<keyword id="KW-0479">Metal-binding</keyword>
<keyword id="KW-0520">NAD</keyword>
<keyword id="KW-0560">Oxidoreductase</keyword>
<keyword id="KW-0862">Zinc</keyword>
<name>TDH_MARMS</name>
<evidence type="ECO:0000255" key="1">
    <source>
        <dbReference type="HAMAP-Rule" id="MF_00627"/>
    </source>
</evidence>